<reference key="1">
    <citation type="journal article" date="2002" name="Nature">
        <title>The genome sequence of Schizosaccharomyces pombe.</title>
        <authorList>
            <person name="Wood V."/>
            <person name="Gwilliam R."/>
            <person name="Rajandream M.A."/>
            <person name="Lyne M.H."/>
            <person name="Lyne R."/>
            <person name="Stewart A."/>
            <person name="Sgouros J.G."/>
            <person name="Peat N."/>
            <person name="Hayles J."/>
            <person name="Baker S.G."/>
            <person name="Basham D."/>
            <person name="Bowman S."/>
            <person name="Brooks K."/>
            <person name="Brown D."/>
            <person name="Brown S."/>
            <person name="Chillingworth T."/>
            <person name="Churcher C.M."/>
            <person name="Collins M."/>
            <person name="Connor R."/>
            <person name="Cronin A."/>
            <person name="Davis P."/>
            <person name="Feltwell T."/>
            <person name="Fraser A."/>
            <person name="Gentles S."/>
            <person name="Goble A."/>
            <person name="Hamlin N."/>
            <person name="Harris D.E."/>
            <person name="Hidalgo J."/>
            <person name="Hodgson G."/>
            <person name="Holroyd S."/>
            <person name="Hornsby T."/>
            <person name="Howarth S."/>
            <person name="Huckle E.J."/>
            <person name="Hunt S."/>
            <person name="Jagels K."/>
            <person name="James K.D."/>
            <person name="Jones L."/>
            <person name="Jones M."/>
            <person name="Leather S."/>
            <person name="McDonald S."/>
            <person name="McLean J."/>
            <person name="Mooney P."/>
            <person name="Moule S."/>
            <person name="Mungall K.L."/>
            <person name="Murphy L.D."/>
            <person name="Niblett D."/>
            <person name="Odell C."/>
            <person name="Oliver K."/>
            <person name="O'Neil S."/>
            <person name="Pearson D."/>
            <person name="Quail M.A."/>
            <person name="Rabbinowitsch E."/>
            <person name="Rutherford K.M."/>
            <person name="Rutter S."/>
            <person name="Saunders D."/>
            <person name="Seeger K."/>
            <person name="Sharp S."/>
            <person name="Skelton J."/>
            <person name="Simmonds M.N."/>
            <person name="Squares R."/>
            <person name="Squares S."/>
            <person name="Stevens K."/>
            <person name="Taylor K."/>
            <person name="Taylor R.G."/>
            <person name="Tivey A."/>
            <person name="Walsh S.V."/>
            <person name="Warren T."/>
            <person name="Whitehead S."/>
            <person name="Woodward J.R."/>
            <person name="Volckaert G."/>
            <person name="Aert R."/>
            <person name="Robben J."/>
            <person name="Grymonprez B."/>
            <person name="Weltjens I."/>
            <person name="Vanstreels E."/>
            <person name="Rieger M."/>
            <person name="Schaefer M."/>
            <person name="Mueller-Auer S."/>
            <person name="Gabel C."/>
            <person name="Fuchs M."/>
            <person name="Duesterhoeft A."/>
            <person name="Fritzc C."/>
            <person name="Holzer E."/>
            <person name="Moestl D."/>
            <person name="Hilbert H."/>
            <person name="Borzym K."/>
            <person name="Langer I."/>
            <person name="Beck A."/>
            <person name="Lehrach H."/>
            <person name="Reinhardt R."/>
            <person name="Pohl T.M."/>
            <person name="Eger P."/>
            <person name="Zimmermann W."/>
            <person name="Wedler H."/>
            <person name="Wambutt R."/>
            <person name="Purnelle B."/>
            <person name="Goffeau A."/>
            <person name="Cadieu E."/>
            <person name="Dreano S."/>
            <person name="Gloux S."/>
            <person name="Lelaure V."/>
            <person name="Mottier S."/>
            <person name="Galibert F."/>
            <person name="Aves S.J."/>
            <person name="Xiang Z."/>
            <person name="Hunt C."/>
            <person name="Moore K."/>
            <person name="Hurst S.M."/>
            <person name="Lucas M."/>
            <person name="Rochet M."/>
            <person name="Gaillardin C."/>
            <person name="Tallada V.A."/>
            <person name="Garzon A."/>
            <person name="Thode G."/>
            <person name="Daga R.R."/>
            <person name="Cruzado L."/>
            <person name="Jimenez J."/>
            <person name="Sanchez M."/>
            <person name="del Rey F."/>
            <person name="Benito J."/>
            <person name="Dominguez A."/>
            <person name="Revuelta J.L."/>
            <person name="Moreno S."/>
            <person name="Armstrong J."/>
            <person name="Forsburg S.L."/>
            <person name="Cerutti L."/>
            <person name="Lowe T."/>
            <person name="McCombie W.R."/>
            <person name="Paulsen I."/>
            <person name="Potashkin J."/>
            <person name="Shpakovski G.V."/>
            <person name="Ussery D."/>
            <person name="Barrell B.G."/>
            <person name="Nurse P."/>
        </authorList>
    </citation>
    <scope>NUCLEOTIDE SEQUENCE [LARGE SCALE GENOMIC DNA]</scope>
    <source>
        <strain>972 / ATCC 24843</strain>
    </source>
</reference>
<keyword id="KW-1185">Reference proteome</keyword>
<sequence length="43" mass="5123">MLNYVTSRYLATFLQPLSQKWIAFLLKKIFSKRSSIRKTLPFS</sequence>
<organism>
    <name type="scientific">Schizosaccharomyces pombe (strain 972 / ATCC 24843)</name>
    <name type="common">Fission yeast</name>
    <dbReference type="NCBI Taxonomy" id="284812"/>
    <lineage>
        <taxon>Eukaryota</taxon>
        <taxon>Fungi</taxon>
        <taxon>Dikarya</taxon>
        <taxon>Ascomycota</taxon>
        <taxon>Taphrinomycotina</taxon>
        <taxon>Schizosaccharomycetes</taxon>
        <taxon>Schizosaccharomycetales</taxon>
        <taxon>Schizosaccharomycetaceae</taxon>
        <taxon>Schizosaccharomyces</taxon>
    </lineage>
</organism>
<accession>O13886</accession>
<proteinExistence type="predicted"/>
<name>YKB2_SCHPO</name>
<protein>
    <recommendedName>
        <fullName>Uncharacterized protein C823.02</fullName>
    </recommendedName>
</protein>
<dbReference type="EMBL" id="CU329670">
    <property type="protein sequence ID" value="CAB90147.1"/>
    <property type="molecule type" value="Genomic_DNA"/>
</dbReference>
<dbReference type="EMBL" id="Z98599">
    <property type="protein sequence ID" value="CAB11249.3"/>
    <property type="molecule type" value="Genomic_DNA"/>
</dbReference>
<dbReference type="PIR" id="T38057">
    <property type="entry name" value="T38057"/>
</dbReference>
<dbReference type="RefSeq" id="NP_593829.1">
    <property type="nucleotide sequence ID" value="NM_001019258.2"/>
</dbReference>
<dbReference type="SMR" id="O13886"/>
<dbReference type="STRING" id="284812.O13886"/>
<dbReference type="PaxDb" id="4896-SPAC823.02.1"/>
<dbReference type="EnsemblFungi" id="SPAC823.02.1">
    <property type="protein sequence ID" value="SPAC823.02.1:pep"/>
    <property type="gene ID" value="SPAC823.02"/>
</dbReference>
<dbReference type="GeneID" id="2542525"/>
<dbReference type="KEGG" id="spo:2542525"/>
<dbReference type="PomBase" id="SPAC823.02"/>
<dbReference type="VEuPathDB" id="FungiDB:SPAC823.02"/>
<dbReference type="HOGENOM" id="CLU_3242409_0_0_1"/>
<dbReference type="InParanoid" id="O13886"/>
<dbReference type="PRO" id="PR:O13886"/>
<dbReference type="Proteomes" id="UP000002485">
    <property type="component" value="Chromosome I"/>
</dbReference>
<feature type="chain" id="PRO_0000116825" description="Uncharacterized protein C823.02">
    <location>
        <begin position="1"/>
        <end position="43"/>
    </location>
</feature>
<gene>
    <name type="ORF">SPAC1E11.02</name>
    <name type="ORF">SPAC823.02</name>
</gene>